<reference key="1">
    <citation type="journal article" date="2010" name="Genome Biol.">
        <title>Structure and dynamics of the pan-genome of Streptococcus pneumoniae and closely related species.</title>
        <authorList>
            <person name="Donati C."/>
            <person name="Hiller N.L."/>
            <person name="Tettelin H."/>
            <person name="Muzzi A."/>
            <person name="Croucher N.J."/>
            <person name="Angiuoli S.V."/>
            <person name="Oggioni M."/>
            <person name="Dunning Hotopp J.C."/>
            <person name="Hu F.Z."/>
            <person name="Riley D.R."/>
            <person name="Covacci A."/>
            <person name="Mitchell T.J."/>
            <person name="Bentley S.D."/>
            <person name="Kilian M."/>
            <person name="Ehrlich G.D."/>
            <person name="Rappuoli R."/>
            <person name="Moxon E.R."/>
            <person name="Masignani V."/>
        </authorList>
    </citation>
    <scope>NUCLEOTIDE SEQUENCE [LARGE SCALE GENOMIC DNA]</scope>
    <source>
        <strain>Hungary19A-6</strain>
    </source>
</reference>
<sequence>MMDSPKKLGYHMPAEYEPHHGTLMIWPTRPGSWPFQGKDAKRAFTQIIETIAEGERVYLLVEQAYLSEAQSYLGDKVVYLDIPTNDAWARDTGPTILVNDKGKKLAVDWAFNAWGGTYDGLYQDYEEDDQVASRFAEALERPVYDAKPFVLEGGAIHSDGQGTILVTESCLLSPGRNPNLTKEEIENTLLESLGAEKVIWLPYGIYQDETNEHVDNVAAFVGPAEVVLAWTDDENDPQYAMSKADLELLEQETDAKGCHFTIHKLPIPAVRQVVTEEDLPGYIYEEGEEERYAGERLAASYVNFYIANKAVLVPQFEDVNDQVALDILSKCFPDRKVVGIPARDILLGGGNIHCITQQIPE</sequence>
<organism>
    <name type="scientific">Streptococcus pneumoniae (strain Hungary19A-6)</name>
    <dbReference type="NCBI Taxonomy" id="487214"/>
    <lineage>
        <taxon>Bacteria</taxon>
        <taxon>Bacillati</taxon>
        <taxon>Bacillota</taxon>
        <taxon>Bacilli</taxon>
        <taxon>Lactobacillales</taxon>
        <taxon>Streptococcaceae</taxon>
        <taxon>Streptococcus</taxon>
    </lineage>
</organism>
<gene>
    <name evidence="1" type="primary">aguA</name>
    <name type="ordered locus">SPH_1030</name>
</gene>
<keyword id="KW-0378">Hydrolase</keyword>
<protein>
    <recommendedName>
        <fullName evidence="1">Putative agmatine deiminase</fullName>
        <ecNumber evidence="1">3.5.3.12</ecNumber>
    </recommendedName>
    <alternativeName>
        <fullName evidence="1">Agmatine iminohydrolase</fullName>
    </alternativeName>
</protein>
<feature type="chain" id="PRO_1000188417" description="Putative agmatine deiminase">
    <location>
        <begin position="1"/>
        <end position="361"/>
    </location>
</feature>
<feature type="active site" description="Amidino-cysteine intermediate" evidence="1">
    <location>
        <position position="354"/>
    </location>
</feature>
<comment type="catalytic activity">
    <reaction evidence="1">
        <text>agmatine + H2O = N-carbamoylputrescine + NH4(+)</text>
        <dbReference type="Rhea" id="RHEA:18037"/>
        <dbReference type="ChEBI" id="CHEBI:15377"/>
        <dbReference type="ChEBI" id="CHEBI:28938"/>
        <dbReference type="ChEBI" id="CHEBI:58145"/>
        <dbReference type="ChEBI" id="CHEBI:58318"/>
        <dbReference type="EC" id="3.5.3.12"/>
    </reaction>
</comment>
<comment type="similarity">
    <text evidence="1">Belongs to the agmatine deiminase family.</text>
</comment>
<proteinExistence type="inferred from homology"/>
<accession>B1IB89</accession>
<evidence type="ECO:0000255" key="1">
    <source>
        <dbReference type="HAMAP-Rule" id="MF_01841"/>
    </source>
</evidence>
<name>AGUA_STRPI</name>
<dbReference type="EC" id="3.5.3.12" evidence="1"/>
<dbReference type="EMBL" id="CP000936">
    <property type="protein sequence ID" value="ACA35830.1"/>
    <property type="molecule type" value="Genomic_DNA"/>
</dbReference>
<dbReference type="RefSeq" id="WP_000969464.1">
    <property type="nucleotide sequence ID" value="NC_010380.1"/>
</dbReference>
<dbReference type="SMR" id="B1IB89"/>
<dbReference type="KEGG" id="spv:SPH_1030"/>
<dbReference type="HOGENOM" id="CLU_037682_1_0_9"/>
<dbReference type="Proteomes" id="UP000002163">
    <property type="component" value="Chromosome"/>
</dbReference>
<dbReference type="GO" id="GO:0047632">
    <property type="term" value="F:agmatine deiminase activity"/>
    <property type="evidence" value="ECO:0007669"/>
    <property type="project" value="UniProtKB-UniRule"/>
</dbReference>
<dbReference type="GO" id="GO:0004668">
    <property type="term" value="F:protein-arginine deiminase activity"/>
    <property type="evidence" value="ECO:0007669"/>
    <property type="project" value="InterPro"/>
</dbReference>
<dbReference type="GO" id="GO:0009446">
    <property type="term" value="P:putrescine biosynthetic process"/>
    <property type="evidence" value="ECO:0007669"/>
    <property type="project" value="InterPro"/>
</dbReference>
<dbReference type="Gene3D" id="3.75.10.10">
    <property type="entry name" value="L-arginine/glycine Amidinotransferase, Chain A"/>
    <property type="match status" value="1"/>
</dbReference>
<dbReference type="HAMAP" id="MF_01841">
    <property type="entry name" value="Agmatine_deimin"/>
    <property type="match status" value="1"/>
</dbReference>
<dbReference type="InterPro" id="IPR017754">
    <property type="entry name" value="Agmatine_deiminase"/>
</dbReference>
<dbReference type="InterPro" id="IPR007466">
    <property type="entry name" value="Peptidyl-Arg-deiminase_porph"/>
</dbReference>
<dbReference type="NCBIfam" id="TIGR03380">
    <property type="entry name" value="agmatine_aguA"/>
    <property type="match status" value="1"/>
</dbReference>
<dbReference type="NCBIfam" id="NF010070">
    <property type="entry name" value="PRK13551.1"/>
    <property type="match status" value="1"/>
</dbReference>
<dbReference type="PANTHER" id="PTHR31377">
    <property type="entry name" value="AGMATINE DEIMINASE-RELATED"/>
    <property type="match status" value="1"/>
</dbReference>
<dbReference type="PANTHER" id="PTHR31377:SF0">
    <property type="entry name" value="AGMATINE DEIMINASE-RELATED"/>
    <property type="match status" value="1"/>
</dbReference>
<dbReference type="Pfam" id="PF04371">
    <property type="entry name" value="PAD_porph"/>
    <property type="match status" value="1"/>
</dbReference>
<dbReference type="SUPFAM" id="SSF55909">
    <property type="entry name" value="Pentein"/>
    <property type="match status" value="1"/>
</dbReference>